<sequence>MTEYLLLFIGTVLVNNFVLVKFLGLCPFMGVSKKLETAIGMGLATTFVITLASICAWLVNHLILLPLDLVYLRTMAYILVIAVVVQFTEMVVRKTSPDLYRLLGIFLPLITTNCAVLGVPLLSVNLNHTFMQAAIYGFSASIGFSLVMVLFAGVRERLVLADVPAPFKGSSIALVTAGLMALAFMGFAGLVKF</sequence>
<evidence type="ECO:0000255" key="1">
    <source>
        <dbReference type="HAMAP-Rule" id="MF_00459"/>
    </source>
</evidence>
<keyword id="KW-0997">Cell inner membrane</keyword>
<keyword id="KW-1003">Cell membrane</keyword>
<keyword id="KW-0249">Electron transport</keyword>
<keyword id="KW-0472">Membrane</keyword>
<keyword id="KW-1185">Reference proteome</keyword>
<keyword id="KW-1278">Translocase</keyword>
<keyword id="KW-0812">Transmembrane</keyword>
<keyword id="KW-1133">Transmembrane helix</keyword>
<keyword id="KW-0813">Transport</keyword>
<reference key="1">
    <citation type="journal article" date="2008" name="Environ. Microbiol.">
        <title>The genome of Erwinia tasmaniensis strain Et1/99, a non-pathogenic bacterium in the genus Erwinia.</title>
        <authorList>
            <person name="Kube M."/>
            <person name="Migdoll A.M."/>
            <person name="Mueller I."/>
            <person name="Kuhl H."/>
            <person name="Beck A."/>
            <person name="Reinhardt R."/>
            <person name="Geider K."/>
        </authorList>
    </citation>
    <scope>NUCLEOTIDE SEQUENCE [LARGE SCALE GENOMIC DNA]</scope>
    <source>
        <strain>DSM 17950 / CFBP 7177 / CIP 109463 / NCPPB 4357 / Et1/99</strain>
    </source>
</reference>
<accession>B2VEQ1</accession>
<organism>
    <name type="scientific">Erwinia tasmaniensis (strain DSM 17950 / CFBP 7177 / CIP 109463 / NCPPB 4357 / Et1/99)</name>
    <dbReference type="NCBI Taxonomy" id="465817"/>
    <lineage>
        <taxon>Bacteria</taxon>
        <taxon>Pseudomonadati</taxon>
        <taxon>Pseudomonadota</taxon>
        <taxon>Gammaproteobacteria</taxon>
        <taxon>Enterobacterales</taxon>
        <taxon>Erwiniaceae</taxon>
        <taxon>Erwinia</taxon>
    </lineage>
</organism>
<dbReference type="EC" id="7.-.-.-" evidence="1"/>
<dbReference type="EMBL" id="CU468135">
    <property type="protein sequence ID" value="CAO96820.1"/>
    <property type="molecule type" value="Genomic_DNA"/>
</dbReference>
<dbReference type="SMR" id="B2VEQ1"/>
<dbReference type="STRING" id="465817.ETA_17740"/>
<dbReference type="KEGG" id="eta:ETA_17740"/>
<dbReference type="eggNOG" id="COG4657">
    <property type="taxonomic scope" value="Bacteria"/>
</dbReference>
<dbReference type="HOGENOM" id="CLU_095255_1_0_6"/>
<dbReference type="OrthoDB" id="9803631at2"/>
<dbReference type="Proteomes" id="UP000001726">
    <property type="component" value="Chromosome"/>
</dbReference>
<dbReference type="GO" id="GO:0005886">
    <property type="term" value="C:plasma membrane"/>
    <property type="evidence" value="ECO:0007669"/>
    <property type="project" value="UniProtKB-SubCell"/>
</dbReference>
<dbReference type="GO" id="GO:0022900">
    <property type="term" value="P:electron transport chain"/>
    <property type="evidence" value="ECO:0007669"/>
    <property type="project" value="UniProtKB-UniRule"/>
</dbReference>
<dbReference type="HAMAP" id="MF_00459">
    <property type="entry name" value="RsxA_RnfA"/>
    <property type="match status" value="1"/>
</dbReference>
<dbReference type="InterPro" id="IPR011293">
    <property type="entry name" value="Ion_transpt_RnfA/RsxA"/>
</dbReference>
<dbReference type="InterPro" id="IPR003667">
    <property type="entry name" value="NqrDE/RnfAE"/>
</dbReference>
<dbReference type="InterPro" id="IPR050133">
    <property type="entry name" value="NqrDE/RnfAE_oxidrdctase"/>
</dbReference>
<dbReference type="NCBIfam" id="NF003481">
    <property type="entry name" value="PRK05151.1"/>
    <property type="match status" value="1"/>
</dbReference>
<dbReference type="NCBIfam" id="TIGR01943">
    <property type="entry name" value="rnfA"/>
    <property type="match status" value="1"/>
</dbReference>
<dbReference type="PANTHER" id="PTHR30335">
    <property type="entry name" value="INTEGRAL MEMBRANE PROTEIN OF SOXR-REDUCING COMPLEX"/>
    <property type="match status" value="1"/>
</dbReference>
<dbReference type="PANTHER" id="PTHR30335:SF0">
    <property type="entry name" value="ION-TRANSLOCATING OXIDOREDUCTASE COMPLEX SUBUNIT A"/>
    <property type="match status" value="1"/>
</dbReference>
<dbReference type="Pfam" id="PF02508">
    <property type="entry name" value="Rnf-Nqr"/>
    <property type="match status" value="1"/>
</dbReference>
<dbReference type="PIRSF" id="PIRSF006102">
    <property type="entry name" value="NQR_DE"/>
    <property type="match status" value="1"/>
</dbReference>
<name>RNFA_ERWT9</name>
<gene>
    <name evidence="1" type="primary">rnfA</name>
    <name type="ordered locus">ETA_17740</name>
</gene>
<protein>
    <recommendedName>
        <fullName evidence="1">Ion-translocating oxidoreductase complex subunit A</fullName>
        <ecNumber evidence="1">7.-.-.-</ecNumber>
    </recommendedName>
    <alternativeName>
        <fullName evidence="1">Rnf electron transport complex subunit A</fullName>
    </alternativeName>
</protein>
<comment type="function">
    <text evidence="1">Part of a membrane-bound complex that couples electron transfer with translocation of ions across the membrane.</text>
</comment>
<comment type="subunit">
    <text evidence="1">The complex is composed of six subunits: RnfA, RnfB, RnfC, RnfD, RnfE and RnfG.</text>
</comment>
<comment type="subcellular location">
    <subcellularLocation>
        <location evidence="1">Cell inner membrane</location>
        <topology evidence="1">Multi-pass membrane protein</topology>
    </subcellularLocation>
</comment>
<comment type="similarity">
    <text evidence="1">Belongs to the NqrDE/RnfAE family.</text>
</comment>
<feature type="chain" id="PRO_1000191713" description="Ion-translocating oxidoreductase complex subunit A">
    <location>
        <begin position="1"/>
        <end position="193"/>
    </location>
</feature>
<feature type="transmembrane region" description="Helical" evidence="1">
    <location>
        <begin position="5"/>
        <end position="25"/>
    </location>
</feature>
<feature type="transmembrane region" description="Helical" evidence="1">
    <location>
        <begin position="47"/>
        <end position="67"/>
    </location>
</feature>
<feature type="transmembrane region" description="Helical" evidence="1">
    <location>
        <begin position="72"/>
        <end position="92"/>
    </location>
</feature>
<feature type="transmembrane region" description="Helical" evidence="1">
    <location>
        <begin position="102"/>
        <end position="122"/>
    </location>
</feature>
<feature type="transmembrane region" description="Helical" evidence="1">
    <location>
        <begin position="134"/>
        <end position="154"/>
    </location>
</feature>
<feature type="transmembrane region" description="Helical" evidence="1">
    <location>
        <begin position="171"/>
        <end position="191"/>
    </location>
</feature>
<proteinExistence type="inferred from homology"/>